<keyword id="KW-0227">DNA damage</keyword>
<keyword id="KW-0233">DNA recombination</keyword>
<keyword id="KW-0234">DNA repair</keyword>
<keyword id="KW-0235">DNA replication</keyword>
<keyword id="KW-0238">DNA-binding</keyword>
<keyword id="KW-0479">Metal-binding</keyword>
<keyword id="KW-0539">Nucleus</keyword>
<keyword id="KW-1185">Reference proteome</keyword>
<keyword id="KW-0862">Zinc</keyword>
<keyword id="KW-0863">Zinc-finger</keyword>
<proteinExistence type="evidence at protein level"/>
<reference key="1">
    <citation type="journal article" date="2001" name="Gene">
        <title>Two types of replication protein A 70 kDa subunit in rice, Oryza sativa: molecular cloning, characterization, and cellular &amp; tissue distribution.</title>
        <authorList>
            <person name="Ishibashi T."/>
            <person name="Kimura S."/>
            <person name="Furukawa T."/>
            <person name="Hatanaka M."/>
            <person name="Hashimoto J."/>
            <person name="Sakaguchi K."/>
        </authorList>
    </citation>
    <scope>NUCLEOTIDE SEQUENCE [MRNA]</scope>
    <scope>TISSUE SPECIFICITY</scope>
    <scope>INDUCTION</scope>
    <source>
        <strain>cv. Nipponbare</strain>
    </source>
</reference>
<reference key="2">
    <citation type="journal article" date="2005" name="Nature">
        <title>The map-based sequence of the rice genome.</title>
        <authorList>
            <consortium name="International rice genome sequencing project (IRGSP)"/>
        </authorList>
    </citation>
    <scope>NUCLEOTIDE SEQUENCE [LARGE SCALE GENOMIC DNA]</scope>
    <source>
        <strain>cv. Nipponbare</strain>
    </source>
</reference>
<reference key="3">
    <citation type="journal article" date="2008" name="Nucleic Acids Res.">
        <title>The rice annotation project database (RAP-DB): 2008 update.</title>
        <authorList>
            <consortium name="The rice annotation project (RAP)"/>
        </authorList>
    </citation>
    <scope>GENOME REANNOTATION</scope>
    <source>
        <strain>cv. Nipponbare</strain>
    </source>
</reference>
<reference key="4">
    <citation type="journal article" date="2013" name="Rice">
        <title>Improvement of the Oryza sativa Nipponbare reference genome using next generation sequence and optical map data.</title>
        <authorList>
            <person name="Kawahara Y."/>
            <person name="de la Bastide M."/>
            <person name="Hamilton J.P."/>
            <person name="Kanamori H."/>
            <person name="McCombie W.R."/>
            <person name="Ouyang S."/>
            <person name="Schwartz D.C."/>
            <person name="Tanaka T."/>
            <person name="Wu J."/>
            <person name="Zhou S."/>
            <person name="Childs K.L."/>
            <person name="Davidson R.M."/>
            <person name="Lin H."/>
            <person name="Quesada-Ocampo L."/>
            <person name="Vaillancourt B."/>
            <person name="Sakai H."/>
            <person name="Lee S.S."/>
            <person name="Kim J."/>
            <person name="Numa H."/>
            <person name="Itoh T."/>
            <person name="Buell C.R."/>
            <person name="Matsumoto T."/>
        </authorList>
    </citation>
    <scope>GENOME REANNOTATION</scope>
    <source>
        <strain>cv. Nipponbare</strain>
    </source>
</reference>
<reference key="5">
    <citation type="journal article" date="2005" name="PLoS Biol.">
        <title>The genomes of Oryza sativa: a history of duplications.</title>
        <authorList>
            <person name="Yu J."/>
            <person name="Wang J."/>
            <person name="Lin W."/>
            <person name="Li S."/>
            <person name="Li H."/>
            <person name="Zhou J."/>
            <person name="Ni P."/>
            <person name="Dong W."/>
            <person name="Hu S."/>
            <person name="Zeng C."/>
            <person name="Zhang J."/>
            <person name="Zhang Y."/>
            <person name="Li R."/>
            <person name="Xu Z."/>
            <person name="Li S."/>
            <person name="Li X."/>
            <person name="Zheng H."/>
            <person name="Cong L."/>
            <person name="Lin L."/>
            <person name="Yin J."/>
            <person name="Geng J."/>
            <person name="Li G."/>
            <person name="Shi J."/>
            <person name="Liu J."/>
            <person name="Lv H."/>
            <person name="Li J."/>
            <person name="Wang J."/>
            <person name="Deng Y."/>
            <person name="Ran L."/>
            <person name="Shi X."/>
            <person name="Wang X."/>
            <person name="Wu Q."/>
            <person name="Li C."/>
            <person name="Ren X."/>
            <person name="Wang J."/>
            <person name="Wang X."/>
            <person name="Li D."/>
            <person name="Liu D."/>
            <person name="Zhang X."/>
            <person name="Ji Z."/>
            <person name="Zhao W."/>
            <person name="Sun Y."/>
            <person name="Zhang Z."/>
            <person name="Bao J."/>
            <person name="Han Y."/>
            <person name="Dong L."/>
            <person name="Ji J."/>
            <person name="Chen P."/>
            <person name="Wu S."/>
            <person name="Liu J."/>
            <person name="Xiao Y."/>
            <person name="Bu D."/>
            <person name="Tan J."/>
            <person name="Yang L."/>
            <person name="Ye C."/>
            <person name="Zhang J."/>
            <person name="Xu J."/>
            <person name="Zhou Y."/>
            <person name="Yu Y."/>
            <person name="Zhang B."/>
            <person name="Zhuang S."/>
            <person name="Wei H."/>
            <person name="Liu B."/>
            <person name="Lei M."/>
            <person name="Yu H."/>
            <person name="Li Y."/>
            <person name="Xu H."/>
            <person name="Wei S."/>
            <person name="He X."/>
            <person name="Fang L."/>
            <person name="Zhang Z."/>
            <person name="Zhang Y."/>
            <person name="Huang X."/>
            <person name="Su Z."/>
            <person name="Tong W."/>
            <person name="Li J."/>
            <person name="Tong Z."/>
            <person name="Li S."/>
            <person name="Ye J."/>
            <person name="Wang L."/>
            <person name="Fang L."/>
            <person name="Lei T."/>
            <person name="Chen C.-S."/>
            <person name="Chen H.-C."/>
            <person name="Xu Z."/>
            <person name="Li H."/>
            <person name="Huang H."/>
            <person name="Zhang F."/>
            <person name="Xu H."/>
            <person name="Li N."/>
            <person name="Zhao C."/>
            <person name="Li S."/>
            <person name="Dong L."/>
            <person name="Huang Y."/>
            <person name="Li L."/>
            <person name="Xi Y."/>
            <person name="Qi Q."/>
            <person name="Li W."/>
            <person name="Zhang B."/>
            <person name="Hu W."/>
            <person name="Zhang Y."/>
            <person name="Tian X."/>
            <person name="Jiao Y."/>
            <person name="Liang X."/>
            <person name="Jin J."/>
            <person name="Gao L."/>
            <person name="Zheng W."/>
            <person name="Hao B."/>
            <person name="Liu S.-M."/>
            <person name="Wang W."/>
            <person name="Yuan L."/>
            <person name="Cao M."/>
            <person name="McDermott J."/>
            <person name="Samudrala R."/>
            <person name="Wang J."/>
            <person name="Wong G.K.-S."/>
            <person name="Yang H."/>
        </authorList>
    </citation>
    <scope>NUCLEOTIDE SEQUENCE [LARGE SCALE GENOMIC DNA]</scope>
    <source>
        <strain>cv. Nipponbare</strain>
    </source>
</reference>
<reference key="6">
    <citation type="journal article" date="2003" name="Science">
        <title>Collection, mapping, and annotation of over 28,000 cDNA clones from japonica rice.</title>
        <authorList>
            <consortium name="The rice full-length cDNA consortium"/>
        </authorList>
    </citation>
    <scope>NUCLEOTIDE SEQUENCE [LARGE SCALE MRNA]</scope>
    <source>
        <strain>cv. Nipponbare</strain>
    </source>
</reference>
<reference key="7">
    <citation type="journal article" date="2005" name="FEBS J.">
        <title>Two types of replication protein A in seed plants.</title>
        <authorList>
            <person name="Ishibashi T."/>
            <person name="Koga A."/>
            <person name="Yamamoto T."/>
            <person name="Uchiyama Y."/>
            <person name="Mori Y."/>
            <person name="Hashimoto J."/>
            <person name="Kimura S."/>
            <person name="Sakaguchi K."/>
        </authorList>
    </citation>
    <scope>FUNCTION</scope>
    <scope>INTERACTION WITH RPA2A</scope>
</reference>
<reference key="8">
    <citation type="journal article" date="2006" name="J. Biochem.">
        <title>A higher plant has three different types of RPA heterotrimeric complex.</title>
        <authorList>
            <person name="Ishibashi T."/>
            <person name="Kimura S."/>
            <person name="Sakaguchi K."/>
        </authorList>
    </citation>
    <scope>INTERACTION WITH RPA2B</scope>
</reference>
<reference key="9">
    <citation type="journal article" date="2009" name="Plant Physiol.">
        <title>Replication protein A (RPA1a) is required for meiotic and somatic DNA repair but is dispensable for DNA replication and homologous recombination in rice.</title>
        <authorList>
            <person name="Chang Y."/>
            <person name="Gong L."/>
            <person name="Yuan W."/>
            <person name="Li X."/>
            <person name="Chen G."/>
            <person name="Li X."/>
            <person name="Zhang Q."/>
            <person name="Wu C."/>
        </authorList>
    </citation>
    <scope>FUNCTION</scope>
    <scope>DISRUPTION PHENOTYPE</scope>
</reference>
<comment type="function">
    <text evidence="3 5">Component of the replication protein A complex (RPA) required for DNA recombination, repair and replication. The activity of RPA is mediated by single-stranded DNA binding and protein interactions. Plays an essential role in meiotic and somatic DNA repair, but is dispensable for DNA replication and homologous recombination. Is essential for normal progression through meiosis in pollen mother cells. Is involved in repair of double-strand DNA breaks (DSBs) induced by genotoxic stresses.</text>
</comment>
<comment type="subunit">
    <text evidence="1 3 4">Heterotrimer of RPA1, RPA2 and RPA3 (canonical replication protein A complex) (By similarity). Interacts with RPA2B.</text>
</comment>
<comment type="interaction">
    <interactant intactId="EBI-849583">
        <id>Q6YZ49</id>
    </interactant>
    <interactant intactId="EBI-849532">
        <id>Q6H7J5</id>
        <label>RPA2B</label>
    </interactant>
    <organismsDiffer>false</organismsDiffer>
    <experiments>4</experiments>
</comment>
<comment type="subcellular location">
    <subcellularLocation>
        <location evidence="1">Nucleus</location>
    </subcellularLocation>
</comment>
<comment type="tissue specificity">
    <text evidence="2">Expressed in root tips, roots, shoot apical meristem (SAM), young leaves, flag leaves and ears, and at lower levels in mature leaves.</text>
</comment>
<comment type="induction">
    <text evidence="2">Repressed by sucrose starvation.</text>
</comment>
<comment type="disruption phenotype">
    <text evidence="5">Normal phenotype during vegetative growth, but sterility at the reproductive stage. No formation of embryo sac in female meiocytes and abnormal chromosomal fragmentation after anaphase I in male meiocytes.</text>
</comment>
<comment type="similarity">
    <text evidence="6">Belongs to the replication factor A protein 1 family.</text>
</comment>
<comment type="sequence caution" evidence="6">
    <conflict type="erroneous initiation">
        <sequence resource="EMBL-CDS" id="BAB40712"/>
    </conflict>
    <text>Truncated N-terminus.</text>
</comment>
<feature type="chain" id="PRO_0000422620" description="Replication protein A 70 kDa DNA-binding subunit A">
    <location>
        <begin position="1"/>
        <end position="656"/>
    </location>
</feature>
<feature type="DNA-binding region" description="OB">
    <location>
        <begin position="225"/>
        <end position="307"/>
    </location>
</feature>
<feature type="zinc finger region" description="C4-type" evidence="1">
    <location>
        <begin position="516"/>
        <end position="542"/>
    </location>
</feature>
<feature type="sequence conflict" description="In Ref. 1; BAB40712." evidence="6" ref="1">
    <original>L</original>
    <variation>F</variation>
    <location>
        <position position="435"/>
    </location>
</feature>
<feature type="sequence conflict" description="In Ref. 1; BAB40712." evidence="6" ref="1">
    <original>S</original>
    <variation>F</variation>
    <location>
        <position position="459"/>
    </location>
</feature>
<evidence type="ECO:0000250" key="1"/>
<evidence type="ECO:0000269" key="2">
    <source>
    </source>
</evidence>
<evidence type="ECO:0000269" key="3">
    <source>
    </source>
</evidence>
<evidence type="ECO:0000269" key="4">
    <source>
    </source>
</evidence>
<evidence type="ECO:0000269" key="5">
    <source>
    </source>
</evidence>
<evidence type="ECO:0000305" key="6"/>
<dbReference type="EMBL" id="AB042415">
    <property type="protein sequence ID" value="BAB40712.1"/>
    <property type="status" value="ALT_INIT"/>
    <property type="molecule type" value="mRNA"/>
</dbReference>
<dbReference type="EMBL" id="AP004140">
    <property type="protein sequence ID" value="BAD16963.1"/>
    <property type="molecule type" value="Genomic_DNA"/>
</dbReference>
<dbReference type="EMBL" id="AP005538">
    <property type="protein sequence ID" value="BAD17384.1"/>
    <property type="molecule type" value="Genomic_DNA"/>
</dbReference>
<dbReference type="EMBL" id="AP008208">
    <property type="protein sequence ID" value="BAF10201.1"/>
    <property type="molecule type" value="Genomic_DNA"/>
</dbReference>
<dbReference type="EMBL" id="AP014958">
    <property type="protein sequence ID" value="BAS81173.1"/>
    <property type="molecule type" value="Genomic_DNA"/>
</dbReference>
<dbReference type="EMBL" id="CM000139">
    <property type="protein sequence ID" value="EAZ24804.1"/>
    <property type="molecule type" value="Genomic_DNA"/>
</dbReference>
<dbReference type="EMBL" id="AK072308">
    <property type="protein sequence ID" value="BAG92916.1"/>
    <property type="molecule type" value="mRNA"/>
</dbReference>
<dbReference type="EMBL" id="AK101212">
    <property type="protein sequence ID" value="BAG94958.1"/>
    <property type="molecule type" value="mRNA"/>
</dbReference>
<dbReference type="RefSeq" id="XP_015625818.1">
    <property type="nucleotide sequence ID" value="XM_015770332.1"/>
</dbReference>
<dbReference type="SMR" id="Q6YZ49"/>
<dbReference type="FunCoup" id="Q6YZ49">
    <property type="interactions" value="2894"/>
</dbReference>
<dbReference type="IntAct" id="Q6YZ49">
    <property type="interactions" value="1"/>
</dbReference>
<dbReference type="STRING" id="39947.Q6YZ49"/>
<dbReference type="PaxDb" id="39947-Q6YZ49"/>
<dbReference type="EnsemblPlants" id="Os02t0776800-01">
    <property type="protein sequence ID" value="Os02t0776800-01"/>
    <property type="gene ID" value="Os02g0776800"/>
</dbReference>
<dbReference type="EnsemblPlants" id="Os02t0776800-02">
    <property type="protein sequence ID" value="Os02t0776800-02"/>
    <property type="gene ID" value="Os02g0776800"/>
</dbReference>
<dbReference type="Gramene" id="Os02t0776800-01">
    <property type="protein sequence ID" value="Os02t0776800-01"/>
    <property type="gene ID" value="Os02g0776800"/>
</dbReference>
<dbReference type="Gramene" id="Os02t0776800-02">
    <property type="protein sequence ID" value="Os02t0776800-02"/>
    <property type="gene ID" value="Os02g0776800"/>
</dbReference>
<dbReference type="KEGG" id="dosa:Os02g0776800"/>
<dbReference type="eggNOG" id="KOG0851">
    <property type="taxonomic scope" value="Eukaryota"/>
</dbReference>
<dbReference type="HOGENOM" id="CLU_012393_3_1_1"/>
<dbReference type="InParanoid" id="Q6YZ49"/>
<dbReference type="OMA" id="DQCDAFY"/>
<dbReference type="OrthoDB" id="1751331at2759"/>
<dbReference type="Proteomes" id="UP000000763">
    <property type="component" value="Chromosome 2"/>
</dbReference>
<dbReference type="Proteomes" id="UP000007752">
    <property type="component" value="Chromosome 2"/>
</dbReference>
<dbReference type="Proteomes" id="UP000059680">
    <property type="component" value="Chromosome 2"/>
</dbReference>
<dbReference type="ExpressionAtlas" id="Q6YZ49">
    <property type="expression patterns" value="baseline and differential"/>
</dbReference>
<dbReference type="GO" id="GO:0000785">
    <property type="term" value="C:chromatin"/>
    <property type="evidence" value="ECO:0007669"/>
    <property type="project" value="EnsemblPlants"/>
</dbReference>
<dbReference type="GO" id="GO:0005662">
    <property type="term" value="C:DNA replication factor A complex"/>
    <property type="evidence" value="ECO:0000318"/>
    <property type="project" value="GO_Central"/>
</dbReference>
<dbReference type="GO" id="GO:0003684">
    <property type="term" value="F:damaged DNA binding"/>
    <property type="evidence" value="ECO:0000318"/>
    <property type="project" value="GO_Central"/>
</dbReference>
<dbReference type="GO" id="GO:0043047">
    <property type="term" value="F:single-stranded telomeric DNA binding"/>
    <property type="evidence" value="ECO:0000318"/>
    <property type="project" value="GO_Central"/>
</dbReference>
<dbReference type="GO" id="GO:0008270">
    <property type="term" value="F:zinc ion binding"/>
    <property type="evidence" value="ECO:0007669"/>
    <property type="project" value="UniProtKB-KW"/>
</dbReference>
<dbReference type="GO" id="GO:0051026">
    <property type="term" value="P:chiasma assembly"/>
    <property type="evidence" value="ECO:0007669"/>
    <property type="project" value="EnsemblPlants"/>
</dbReference>
<dbReference type="GO" id="GO:0006281">
    <property type="term" value="P:DNA repair"/>
    <property type="evidence" value="ECO:0000315"/>
    <property type="project" value="UniProtKB"/>
</dbReference>
<dbReference type="GO" id="GO:0006260">
    <property type="term" value="P:DNA replication"/>
    <property type="evidence" value="ECO:0000318"/>
    <property type="project" value="GO_Central"/>
</dbReference>
<dbReference type="GO" id="GO:0000724">
    <property type="term" value="P:double-strand break repair via homologous recombination"/>
    <property type="evidence" value="ECO:0000318"/>
    <property type="project" value="GO_Central"/>
</dbReference>
<dbReference type="GO" id="GO:0007141">
    <property type="term" value="P:male meiosis I"/>
    <property type="evidence" value="ECO:0007669"/>
    <property type="project" value="EnsemblPlants"/>
</dbReference>
<dbReference type="GO" id="GO:0007140">
    <property type="term" value="P:male meiotic nuclear division"/>
    <property type="evidence" value="ECO:0000315"/>
    <property type="project" value="UniProtKB"/>
</dbReference>
<dbReference type="GO" id="GO:0051321">
    <property type="term" value="P:meiotic cell cycle"/>
    <property type="evidence" value="ECO:0000318"/>
    <property type="project" value="GO_Central"/>
</dbReference>
<dbReference type="GO" id="GO:0006289">
    <property type="term" value="P:nucleotide-excision repair"/>
    <property type="evidence" value="ECO:0000318"/>
    <property type="project" value="GO_Central"/>
</dbReference>
<dbReference type="GO" id="GO:0009555">
    <property type="term" value="P:pollen development"/>
    <property type="evidence" value="ECO:0000315"/>
    <property type="project" value="UniProtKB"/>
</dbReference>
<dbReference type="GO" id="GO:0007004">
    <property type="term" value="P:telomere maintenance via telomerase"/>
    <property type="evidence" value="ECO:0000318"/>
    <property type="project" value="GO_Central"/>
</dbReference>
<dbReference type="CDD" id="cd04474">
    <property type="entry name" value="RPA1_DBD_A"/>
    <property type="match status" value="1"/>
</dbReference>
<dbReference type="CDD" id="cd04475">
    <property type="entry name" value="RPA1_DBD_B"/>
    <property type="match status" value="1"/>
</dbReference>
<dbReference type="CDD" id="cd04476">
    <property type="entry name" value="RPA1_DBD_C"/>
    <property type="match status" value="1"/>
</dbReference>
<dbReference type="CDD" id="cd04477">
    <property type="entry name" value="RPA1N"/>
    <property type="match status" value="1"/>
</dbReference>
<dbReference type="FunFam" id="2.40.50.140:FF:000041">
    <property type="entry name" value="Replication protein A subunit"/>
    <property type="match status" value="1"/>
</dbReference>
<dbReference type="FunFam" id="2.40.50.140:FF:000064">
    <property type="entry name" value="Replication protein A subunit"/>
    <property type="match status" value="1"/>
</dbReference>
<dbReference type="FunFam" id="2.40.50.140:FF:000090">
    <property type="entry name" value="Replication protein A subunit"/>
    <property type="match status" value="1"/>
</dbReference>
<dbReference type="FunFam" id="2.40.50.140:FF:000117">
    <property type="entry name" value="Replication protein A subunit"/>
    <property type="match status" value="1"/>
</dbReference>
<dbReference type="Gene3D" id="2.40.50.140">
    <property type="entry name" value="Nucleic acid-binding proteins"/>
    <property type="match status" value="4"/>
</dbReference>
<dbReference type="InterPro" id="IPR047192">
    <property type="entry name" value="Euk_RPA1_DBD_C"/>
</dbReference>
<dbReference type="InterPro" id="IPR012340">
    <property type="entry name" value="NA-bd_OB-fold"/>
</dbReference>
<dbReference type="InterPro" id="IPR004365">
    <property type="entry name" value="NA-bd_OB_tRNA"/>
</dbReference>
<dbReference type="InterPro" id="IPR013955">
    <property type="entry name" value="Rep_factor-A_C"/>
</dbReference>
<dbReference type="InterPro" id="IPR007199">
    <property type="entry name" value="Rep_factor-A_N"/>
</dbReference>
<dbReference type="InterPro" id="IPR031657">
    <property type="entry name" value="REPA_OB_2"/>
</dbReference>
<dbReference type="InterPro" id="IPR004591">
    <property type="entry name" value="Rfa1"/>
</dbReference>
<dbReference type="NCBIfam" id="TIGR00617">
    <property type="entry name" value="rpa1"/>
    <property type="match status" value="1"/>
</dbReference>
<dbReference type="PANTHER" id="PTHR23273">
    <property type="entry name" value="REPLICATION FACTOR A 1, RFA1"/>
    <property type="match status" value="1"/>
</dbReference>
<dbReference type="PANTHER" id="PTHR23273:SF47">
    <property type="entry name" value="REPLICATION PROTEIN A 70 KDA DNA-BINDING SUBUNIT A"/>
    <property type="match status" value="1"/>
</dbReference>
<dbReference type="Pfam" id="PF04057">
    <property type="entry name" value="Rep-A_N"/>
    <property type="match status" value="1"/>
</dbReference>
<dbReference type="Pfam" id="PF08646">
    <property type="entry name" value="Rep_fac-A_C"/>
    <property type="match status" value="1"/>
</dbReference>
<dbReference type="Pfam" id="PF16900">
    <property type="entry name" value="REPA_OB_2"/>
    <property type="match status" value="1"/>
</dbReference>
<dbReference type="Pfam" id="PF01336">
    <property type="entry name" value="tRNA_anti-codon"/>
    <property type="match status" value="1"/>
</dbReference>
<dbReference type="SUPFAM" id="SSF50249">
    <property type="entry name" value="Nucleic acid-binding proteins"/>
    <property type="match status" value="4"/>
</dbReference>
<sequence>MAMARLTPNGVAAALAGDTNLKPVLQIVELRGVQVNGAGVTRGERFRAVVSDGTAASSALFAAQLSDHARSGALRRGSIVQLSEYVINEVGPRRIIVILNLEVLVSECEIIGNPTALSETGSPIPNPTRVEQFNGAPQYGLMAGNSSNTTTKPSDNVPLFQNSMAGNSSNFATRPSDKVPVFQPTVQPSYRPAPNYKNHGAIMKNEAPARIIPISALNPYQGRWAIKARVTAKGDIRRYHNAKGDGKVFSFDLLDSDGGEIRVTCFNALLDRFYEVVEVGKVYVVSRGNLRPAQKNYNHLNNEWEILLENGSTVDLCPDENSSIPTQRFDFRPINEIEDAQNNAILDIIGVVTSVNPCTTIQRKNGMETQKRTMNLKDMSGRSVEVTMWGDFCNREGSQLQGMVERGIFPVLAVKAGKVSDFSGKSVGTISSTQLFINPDSAEAHSLRQWFDSGGRDASTQSISRDITPGASRNEIRKTVAQIKDEGLGMGDKPDWITVKATVIFFKNESFFYTACPNMIGDRQCNKKVTKSTNGNWTCDKCDREFEECDYRYLLQFQIQDHSGTAWVTAFQEAGQELLGCSATELNALKEREDPRFADTMLNCLFQEYLLRLKVKEESYGDERKVKNTAVKVEKVDPSGESKFLLDLISKSSALH</sequence>
<accession>Q6YZ49</accession>
<accession>A0A0P0VQ40</accession>
<accession>Q9AVL8</accession>
<protein>
    <recommendedName>
        <fullName>Replication protein A 70 kDa DNA-binding subunit A</fullName>
        <shortName>OsRPA70a</shortName>
    </recommendedName>
    <alternativeName>
        <fullName>Replication factor A protein 1A</fullName>
    </alternativeName>
    <alternativeName>
        <fullName>Replication protein A 1A</fullName>
    </alternativeName>
</protein>
<organism>
    <name type="scientific">Oryza sativa subsp. japonica</name>
    <name type="common">Rice</name>
    <dbReference type="NCBI Taxonomy" id="39947"/>
    <lineage>
        <taxon>Eukaryota</taxon>
        <taxon>Viridiplantae</taxon>
        <taxon>Streptophyta</taxon>
        <taxon>Embryophyta</taxon>
        <taxon>Tracheophyta</taxon>
        <taxon>Spermatophyta</taxon>
        <taxon>Magnoliopsida</taxon>
        <taxon>Liliopsida</taxon>
        <taxon>Poales</taxon>
        <taxon>Poaceae</taxon>
        <taxon>BOP clade</taxon>
        <taxon>Oryzoideae</taxon>
        <taxon>Oryzeae</taxon>
        <taxon>Oryzinae</taxon>
        <taxon>Oryza</taxon>
        <taxon>Oryza sativa</taxon>
    </lineage>
</organism>
<name>RFA1A_ORYSJ</name>
<gene>
    <name type="primary">RPA1A</name>
    <name type="synonym">RPA70A</name>
    <name type="ordered locus">Os02g0776800</name>
    <name type="ordered locus">LOC_Os02g53680</name>
    <name type="ORF">OJ1534_E09.2</name>
    <name type="ORF">OsJ_08582</name>
    <name type="ORF">OSJNBb0013K01.36</name>
</gene>